<evidence type="ECO:0000255" key="1">
    <source>
        <dbReference type="HAMAP-Rule" id="MF_01038"/>
    </source>
</evidence>
<comment type="function">
    <text evidence="1">Catalyzes the interconversion of 2-phosphoglycerate and 3-phosphoglycerate.</text>
</comment>
<comment type="catalytic activity">
    <reaction evidence="1">
        <text>(2R)-2-phosphoglycerate = (2R)-3-phosphoglycerate</text>
        <dbReference type="Rhea" id="RHEA:15901"/>
        <dbReference type="ChEBI" id="CHEBI:58272"/>
        <dbReference type="ChEBI" id="CHEBI:58289"/>
        <dbReference type="EC" id="5.4.2.12"/>
    </reaction>
</comment>
<comment type="cofactor">
    <cofactor evidence="1">
        <name>Mn(2+)</name>
        <dbReference type="ChEBI" id="CHEBI:29035"/>
    </cofactor>
    <text evidence="1">Binds 2 manganese ions per subunit.</text>
</comment>
<comment type="pathway">
    <text evidence="1">Carbohydrate degradation; glycolysis; pyruvate from D-glyceraldehyde 3-phosphate: step 3/5.</text>
</comment>
<comment type="subunit">
    <text evidence="1">Monomer.</text>
</comment>
<comment type="similarity">
    <text evidence="1">Belongs to the BPG-independent phosphoglycerate mutase family.</text>
</comment>
<keyword id="KW-0324">Glycolysis</keyword>
<keyword id="KW-0413">Isomerase</keyword>
<keyword id="KW-0464">Manganese</keyword>
<keyword id="KW-0479">Metal-binding</keyword>
<organism>
    <name type="scientific">Prochlorococcus marinus (strain MIT 9303)</name>
    <dbReference type="NCBI Taxonomy" id="59922"/>
    <lineage>
        <taxon>Bacteria</taxon>
        <taxon>Bacillati</taxon>
        <taxon>Cyanobacteriota</taxon>
        <taxon>Cyanophyceae</taxon>
        <taxon>Synechococcales</taxon>
        <taxon>Prochlorococcaceae</taxon>
        <taxon>Prochlorococcus</taxon>
    </lineage>
</organism>
<name>GPMI_PROM3</name>
<reference key="1">
    <citation type="journal article" date="2007" name="PLoS Genet.">
        <title>Patterns and implications of gene gain and loss in the evolution of Prochlorococcus.</title>
        <authorList>
            <person name="Kettler G.C."/>
            <person name="Martiny A.C."/>
            <person name="Huang K."/>
            <person name="Zucker J."/>
            <person name="Coleman M.L."/>
            <person name="Rodrigue S."/>
            <person name="Chen F."/>
            <person name="Lapidus A."/>
            <person name="Ferriera S."/>
            <person name="Johnson J."/>
            <person name="Steglich C."/>
            <person name="Church G.M."/>
            <person name="Richardson P."/>
            <person name="Chisholm S.W."/>
        </authorList>
    </citation>
    <scope>NUCLEOTIDE SEQUENCE [LARGE SCALE GENOMIC DNA]</scope>
    <source>
        <strain>MIT 9303</strain>
    </source>
</reference>
<dbReference type="EC" id="5.4.2.12" evidence="1"/>
<dbReference type="EMBL" id="CP000554">
    <property type="protein sequence ID" value="ABM77260.1"/>
    <property type="molecule type" value="Genomic_DNA"/>
</dbReference>
<dbReference type="RefSeq" id="WP_011825183.1">
    <property type="nucleotide sequence ID" value="NC_008820.1"/>
</dbReference>
<dbReference type="SMR" id="A2C700"/>
<dbReference type="STRING" id="59922.P9303_05081"/>
<dbReference type="KEGG" id="pmf:P9303_05081"/>
<dbReference type="HOGENOM" id="CLU_026099_2_0_3"/>
<dbReference type="BioCyc" id="PMAR59922:G1G80-468-MONOMER"/>
<dbReference type="UniPathway" id="UPA00109">
    <property type="reaction ID" value="UER00186"/>
</dbReference>
<dbReference type="Proteomes" id="UP000002274">
    <property type="component" value="Chromosome"/>
</dbReference>
<dbReference type="GO" id="GO:0005829">
    <property type="term" value="C:cytosol"/>
    <property type="evidence" value="ECO:0007669"/>
    <property type="project" value="TreeGrafter"/>
</dbReference>
<dbReference type="GO" id="GO:0030145">
    <property type="term" value="F:manganese ion binding"/>
    <property type="evidence" value="ECO:0007669"/>
    <property type="project" value="UniProtKB-UniRule"/>
</dbReference>
<dbReference type="GO" id="GO:0004619">
    <property type="term" value="F:phosphoglycerate mutase activity"/>
    <property type="evidence" value="ECO:0007669"/>
    <property type="project" value="UniProtKB-EC"/>
</dbReference>
<dbReference type="GO" id="GO:0006007">
    <property type="term" value="P:glucose catabolic process"/>
    <property type="evidence" value="ECO:0007669"/>
    <property type="project" value="InterPro"/>
</dbReference>
<dbReference type="GO" id="GO:0006096">
    <property type="term" value="P:glycolytic process"/>
    <property type="evidence" value="ECO:0007669"/>
    <property type="project" value="UniProtKB-UniRule"/>
</dbReference>
<dbReference type="CDD" id="cd16010">
    <property type="entry name" value="iPGM"/>
    <property type="match status" value="1"/>
</dbReference>
<dbReference type="FunFam" id="3.40.1450.10:FF:000002">
    <property type="entry name" value="2,3-bisphosphoglycerate-independent phosphoglycerate mutase"/>
    <property type="match status" value="1"/>
</dbReference>
<dbReference type="Gene3D" id="3.40.720.10">
    <property type="entry name" value="Alkaline Phosphatase, subunit A"/>
    <property type="match status" value="1"/>
</dbReference>
<dbReference type="Gene3D" id="3.40.1450.10">
    <property type="entry name" value="BPG-independent phosphoglycerate mutase, domain B"/>
    <property type="match status" value="1"/>
</dbReference>
<dbReference type="HAMAP" id="MF_01038">
    <property type="entry name" value="GpmI"/>
    <property type="match status" value="1"/>
</dbReference>
<dbReference type="InterPro" id="IPR017850">
    <property type="entry name" value="Alkaline_phosphatase_core_sf"/>
</dbReference>
<dbReference type="InterPro" id="IPR011258">
    <property type="entry name" value="BPG-indep_PGM_N"/>
</dbReference>
<dbReference type="InterPro" id="IPR006124">
    <property type="entry name" value="Metalloenzyme"/>
</dbReference>
<dbReference type="InterPro" id="IPR036646">
    <property type="entry name" value="PGAM_B_sf"/>
</dbReference>
<dbReference type="InterPro" id="IPR005995">
    <property type="entry name" value="Pgm_bpd_ind"/>
</dbReference>
<dbReference type="NCBIfam" id="TIGR01307">
    <property type="entry name" value="pgm_bpd_ind"/>
    <property type="match status" value="1"/>
</dbReference>
<dbReference type="PANTHER" id="PTHR31637">
    <property type="entry name" value="2,3-BISPHOSPHOGLYCERATE-INDEPENDENT PHOSPHOGLYCERATE MUTASE"/>
    <property type="match status" value="1"/>
</dbReference>
<dbReference type="PANTHER" id="PTHR31637:SF0">
    <property type="entry name" value="2,3-BISPHOSPHOGLYCERATE-INDEPENDENT PHOSPHOGLYCERATE MUTASE"/>
    <property type="match status" value="1"/>
</dbReference>
<dbReference type="Pfam" id="PF06415">
    <property type="entry name" value="iPGM_N"/>
    <property type="match status" value="1"/>
</dbReference>
<dbReference type="Pfam" id="PF01676">
    <property type="entry name" value="Metalloenzyme"/>
    <property type="match status" value="1"/>
</dbReference>
<dbReference type="PIRSF" id="PIRSF001492">
    <property type="entry name" value="IPGAM"/>
    <property type="match status" value="1"/>
</dbReference>
<dbReference type="SUPFAM" id="SSF64158">
    <property type="entry name" value="2,3-Bisphosphoglycerate-independent phosphoglycerate mutase, substrate-binding domain"/>
    <property type="match status" value="1"/>
</dbReference>
<dbReference type="SUPFAM" id="SSF53649">
    <property type="entry name" value="Alkaline phosphatase-like"/>
    <property type="match status" value="1"/>
</dbReference>
<protein>
    <recommendedName>
        <fullName evidence="1">2,3-bisphosphoglycerate-independent phosphoglycerate mutase</fullName>
        <shortName evidence="1">BPG-independent PGAM</shortName>
        <shortName evidence="1">Phosphoglyceromutase</shortName>
        <shortName evidence="1">iPGM</shortName>
        <ecNumber evidence="1">5.4.2.12</ecNumber>
    </recommendedName>
</protein>
<gene>
    <name evidence="1" type="primary">gpmI</name>
    <name type="ordered locus">P9303_05081</name>
</gene>
<sequence>MSSSSSGNSRHFGRVAPVVLAILDGWGHREELEHNSIRSAETPIMDALWHAYPHTLIEASGAAVGLPDNQMGNSEVGHLTIGAGRVIRQELVRISETVQTGRLGQTPALIALAERLRKSDGTLHLLGLCSDGGVHSHINHLCGLLHWAAAAGLNKVALHLITDGRDTPTQSASNYLHQIEDAINASGVGELASLCGRYWAMDRDHRWERTIRAYEVLTDPNQSISRVTAEDVLSASYANGTTDEFLEPTRLSNNYFKDGDGLVMFNFRPDRARQLVQSLTLPDFDGFPRANQPSLDVVTFTQYEHDLPVAVAFPAESLDDLLGQVVSEHGLRQYRTAETEKYPHVTYFMNGGIEQPLAGEERHLVPSPRVATYDLAPAMSADTLTESCVKAIESGVYSLVIINYANPDMVGHTGVMGAAQEAISTVDRCIGRLLDSTGRMGGTLLITADHGNAELMQGSDGQAWTAHTTNPVPVILVEGEKRKLSGYGNDIQLRAGGGLADIAPTLLQLLDLPKPDAMSGLTLIQAIESPTPSARLPQPV</sequence>
<accession>A2C700</accession>
<feature type="chain" id="PRO_1000063985" description="2,3-bisphosphoglycerate-independent phosphoglycerate mutase">
    <location>
        <begin position="1"/>
        <end position="540"/>
    </location>
</feature>
<feature type="active site" description="Phosphoserine intermediate" evidence="1">
    <location>
        <position position="74"/>
    </location>
</feature>
<feature type="binding site" evidence="1">
    <location>
        <position position="24"/>
    </location>
    <ligand>
        <name>Mn(2+)</name>
        <dbReference type="ChEBI" id="CHEBI:29035"/>
        <label>2</label>
    </ligand>
</feature>
<feature type="binding site" evidence="1">
    <location>
        <position position="74"/>
    </location>
    <ligand>
        <name>Mn(2+)</name>
        <dbReference type="ChEBI" id="CHEBI:29035"/>
        <label>2</label>
    </ligand>
</feature>
<feature type="binding site" evidence="1">
    <location>
        <position position="135"/>
    </location>
    <ligand>
        <name>substrate</name>
    </ligand>
</feature>
<feature type="binding site" evidence="1">
    <location>
        <begin position="165"/>
        <end position="166"/>
    </location>
    <ligand>
        <name>substrate</name>
    </ligand>
</feature>
<feature type="binding site" evidence="1">
    <location>
        <position position="197"/>
    </location>
    <ligand>
        <name>substrate</name>
    </ligand>
</feature>
<feature type="binding site" evidence="1">
    <location>
        <position position="203"/>
    </location>
    <ligand>
        <name>substrate</name>
    </ligand>
</feature>
<feature type="binding site" evidence="1">
    <location>
        <begin position="268"/>
        <end position="271"/>
    </location>
    <ligand>
        <name>substrate</name>
    </ligand>
</feature>
<feature type="binding site" evidence="1">
    <location>
        <position position="341"/>
    </location>
    <ligand>
        <name>substrate</name>
    </ligand>
</feature>
<feature type="binding site" evidence="1">
    <location>
        <position position="408"/>
    </location>
    <ligand>
        <name>Mn(2+)</name>
        <dbReference type="ChEBI" id="CHEBI:29035"/>
        <label>1</label>
    </ligand>
</feature>
<feature type="binding site" evidence="1">
    <location>
        <position position="412"/>
    </location>
    <ligand>
        <name>Mn(2+)</name>
        <dbReference type="ChEBI" id="CHEBI:29035"/>
        <label>1</label>
    </ligand>
</feature>
<feature type="binding site" evidence="1">
    <location>
        <position position="449"/>
    </location>
    <ligand>
        <name>Mn(2+)</name>
        <dbReference type="ChEBI" id="CHEBI:29035"/>
        <label>2</label>
    </ligand>
</feature>
<feature type="binding site" evidence="1">
    <location>
        <position position="450"/>
    </location>
    <ligand>
        <name>Mn(2+)</name>
        <dbReference type="ChEBI" id="CHEBI:29035"/>
        <label>2</label>
    </ligand>
</feature>
<feature type="binding site" evidence="1">
    <location>
        <position position="467"/>
    </location>
    <ligand>
        <name>Mn(2+)</name>
        <dbReference type="ChEBI" id="CHEBI:29035"/>
        <label>1</label>
    </ligand>
</feature>
<proteinExistence type="inferred from homology"/>